<gene>
    <name type="ordered locus">Rv2686c</name>
</gene>
<dbReference type="EMBL" id="JN012502">
    <property type="protein sequence ID" value="AEG75294.1"/>
    <property type="molecule type" value="Genomic_DNA"/>
</dbReference>
<dbReference type="EMBL" id="AL123456">
    <property type="protein sequence ID" value="CCP45484.1"/>
    <property type="molecule type" value="Genomic_DNA"/>
</dbReference>
<dbReference type="PIR" id="A70529">
    <property type="entry name" value="A70529"/>
</dbReference>
<dbReference type="RefSeq" id="NP_217202.1">
    <property type="nucleotide sequence ID" value="NC_000962.3"/>
</dbReference>
<dbReference type="RefSeq" id="WP_003413897.1">
    <property type="nucleotide sequence ID" value="NZ_NVQJ01000017.1"/>
</dbReference>
<dbReference type="SMR" id="P9WJB3"/>
<dbReference type="FunCoup" id="P9WJB3">
    <property type="interactions" value="83"/>
</dbReference>
<dbReference type="STRING" id="83332.Rv2686c"/>
<dbReference type="PaxDb" id="83332-Rv2686c"/>
<dbReference type="DNASU" id="888360"/>
<dbReference type="GeneID" id="888360"/>
<dbReference type="KEGG" id="mtu:Rv2686c"/>
<dbReference type="KEGG" id="mtv:RVBD_2686c"/>
<dbReference type="PATRIC" id="fig|83332.111.peg.2992"/>
<dbReference type="TubercuList" id="Rv2686c"/>
<dbReference type="eggNOG" id="ENOG50316AC">
    <property type="taxonomic scope" value="Bacteria"/>
</dbReference>
<dbReference type="InParanoid" id="P9WJB3"/>
<dbReference type="OrthoDB" id="3567423at2"/>
<dbReference type="PhylomeDB" id="P9WJB3"/>
<dbReference type="Proteomes" id="UP000001584">
    <property type="component" value="Chromosome"/>
</dbReference>
<dbReference type="GO" id="GO:0005886">
    <property type="term" value="C:plasma membrane"/>
    <property type="evidence" value="ECO:0007669"/>
    <property type="project" value="UniProtKB-SubCell"/>
</dbReference>
<dbReference type="GO" id="GO:0015562">
    <property type="term" value="F:efflux transmembrane transporter activity"/>
    <property type="evidence" value="ECO:0000315"/>
    <property type="project" value="MTBBASE"/>
</dbReference>
<dbReference type="GO" id="GO:0046677">
    <property type="term" value="P:response to antibiotic"/>
    <property type="evidence" value="ECO:0007669"/>
    <property type="project" value="UniProtKB-KW"/>
</dbReference>
<dbReference type="GO" id="GO:0055085">
    <property type="term" value="P:transmembrane transport"/>
    <property type="evidence" value="ECO:0000315"/>
    <property type="project" value="MTBBASE"/>
</dbReference>
<sequence>MRAISSLAGPRALAAFGRNDIRGTYRDPLLVMLVIAPVIWTTGVALLTPLFTEMLARRYGFDLVGYYPLILTAFLLLTSIIVAGALAAFLVLDDVDAGTMTALRVTPVPLSVFFGYRAATVMVVTTIYVVATMSCSGILEPGLVSSLIPIGLVAGLSAVVTLLLILAVANNKIQGLAMVRALGMLIAGLPCLPWFISSNWNLAFGVLPPYWAAKAFWVASDHGTWWPYLVGGAVYNLAIVWVLFRRFRAKHA</sequence>
<organism>
    <name type="scientific">Mycobacterium tuberculosis (strain ATCC 25618 / H37Rv)</name>
    <dbReference type="NCBI Taxonomy" id="83332"/>
    <lineage>
        <taxon>Bacteria</taxon>
        <taxon>Bacillati</taxon>
        <taxon>Actinomycetota</taxon>
        <taxon>Actinomycetes</taxon>
        <taxon>Mycobacteriales</taxon>
        <taxon>Mycobacteriaceae</taxon>
        <taxon>Mycobacterium</taxon>
        <taxon>Mycobacterium tuberculosis complex</taxon>
    </lineage>
</organism>
<feature type="chain" id="PRO_0000390879" description="Fluoroquinolones export permease protein Rv2686c">
    <location>
        <begin position="1"/>
        <end position="252"/>
    </location>
</feature>
<feature type="transmembrane region" description="Helical" evidence="1">
    <location>
        <begin position="31"/>
        <end position="51"/>
    </location>
</feature>
<feature type="transmembrane region" description="Helical" evidence="1">
    <location>
        <begin position="69"/>
        <end position="89"/>
    </location>
</feature>
<feature type="transmembrane region" description="Helical" evidence="1">
    <location>
        <begin position="119"/>
        <end position="139"/>
    </location>
</feature>
<feature type="transmembrane region" description="Helical" evidence="1">
    <location>
        <begin position="148"/>
        <end position="168"/>
    </location>
</feature>
<feature type="transmembrane region" description="Helical" evidence="1">
    <location>
        <begin position="176"/>
        <end position="196"/>
    </location>
</feature>
<feature type="transmembrane region" description="Helical" evidence="1">
    <location>
        <begin position="224"/>
        <end position="244"/>
    </location>
</feature>
<reference key="1">
    <citation type="journal article" date="2011" name="J. Clin. Microbiol.">
        <title>Incidence of moxifloxacin resistance in clinical Mycobacterium tuberculosis isolates in Houston, Texas.</title>
        <authorList>
            <person name="El Sahly H.M."/>
            <person name="Teeter L.D."/>
            <person name="Jost K.C. Jr."/>
            <person name="Dunbar D."/>
            <person name="Lew J."/>
            <person name="Graviss E.A."/>
        </authorList>
    </citation>
    <scope>NUCLEOTIDE SEQUENCE [GENOMIC DNA]</scope>
    <source>
        <strain>HN4711</strain>
    </source>
</reference>
<reference key="2">
    <citation type="journal article" date="1998" name="Nature">
        <title>Deciphering the biology of Mycobacterium tuberculosis from the complete genome sequence.</title>
        <authorList>
            <person name="Cole S.T."/>
            <person name="Brosch R."/>
            <person name="Parkhill J."/>
            <person name="Garnier T."/>
            <person name="Churcher C.M."/>
            <person name="Harris D.E."/>
            <person name="Gordon S.V."/>
            <person name="Eiglmeier K."/>
            <person name="Gas S."/>
            <person name="Barry C.E. III"/>
            <person name="Tekaia F."/>
            <person name="Badcock K."/>
            <person name="Basham D."/>
            <person name="Brown D."/>
            <person name="Chillingworth T."/>
            <person name="Connor R."/>
            <person name="Davies R.M."/>
            <person name="Devlin K."/>
            <person name="Feltwell T."/>
            <person name="Gentles S."/>
            <person name="Hamlin N."/>
            <person name="Holroyd S."/>
            <person name="Hornsby T."/>
            <person name="Jagels K."/>
            <person name="Krogh A."/>
            <person name="McLean J."/>
            <person name="Moule S."/>
            <person name="Murphy L.D."/>
            <person name="Oliver S."/>
            <person name="Osborne J."/>
            <person name="Quail M.A."/>
            <person name="Rajandream M.A."/>
            <person name="Rogers J."/>
            <person name="Rutter S."/>
            <person name="Seeger K."/>
            <person name="Skelton S."/>
            <person name="Squares S."/>
            <person name="Squares R."/>
            <person name="Sulston J.E."/>
            <person name="Taylor K."/>
            <person name="Whitehead S."/>
            <person name="Barrell B.G."/>
        </authorList>
    </citation>
    <scope>NUCLEOTIDE SEQUENCE [LARGE SCALE GENOMIC DNA]</scope>
    <source>
        <strain>ATCC 25618 / H37Rv</strain>
    </source>
</reference>
<reference key="3">
    <citation type="journal article" date="2004" name="Antimicrob. Agents Chemother.">
        <title>Rv2686c-Rv2687c-Rv2688c, an ABC fluoroquinolone efflux pump in Mycobacterium tuberculosis.</title>
        <authorList>
            <person name="Pasca M.R."/>
            <person name="Guglierame P."/>
            <person name="Arcesi F."/>
            <person name="Bellinzoni M."/>
            <person name="De Rossi E."/>
            <person name="Riccardi G."/>
        </authorList>
    </citation>
    <scope>FUNCTION IN FLUOROQUINOLONES EXPORT</scope>
    <scope>SUBUNIT</scope>
    <source>
        <strain>ATCC 25618 / H37Rv</strain>
    </source>
</reference>
<protein>
    <recommendedName>
        <fullName>Fluoroquinolones export permease protein Rv2686c</fullName>
    </recommendedName>
</protein>
<evidence type="ECO:0000255" key="1"/>
<evidence type="ECO:0000269" key="2">
    <source>
    </source>
</evidence>
<evidence type="ECO:0000305" key="3"/>
<evidence type="ECO:0000305" key="4">
    <source>
    </source>
</evidence>
<keyword id="KW-0046">Antibiotic resistance</keyword>
<keyword id="KW-1003">Cell membrane</keyword>
<keyword id="KW-0472">Membrane</keyword>
<keyword id="KW-1185">Reference proteome</keyword>
<keyword id="KW-0812">Transmembrane</keyword>
<keyword id="KW-1133">Transmembrane helix</keyword>
<keyword id="KW-0813">Transport</keyword>
<name>FLQE2_MYCTU</name>
<comment type="function">
    <text evidence="2">Part of the ABC transporter complex Rv2686c/Rv2687c/Rv2688c involved in fluoroquinolones export. Confers resistance to ciprofloxacin and, to a lesser extent, norfloxacin, moxifloxacin and sparfloxacin. Probably responsible for the translocation of the substrate across the membrane.</text>
</comment>
<comment type="subunit">
    <text evidence="4">The complex is composed of 2 ATP-binding proteins (Rv2688c) and 2 transmembrane proteins (Rv2686c and Rv2687c).</text>
</comment>
<comment type="subcellular location">
    <subcellularLocation>
        <location evidence="3">Cell membrane</location>
        <topology evidence="3">Multi-pass membrane protein</topology>
    </subcellularLocation>
</comment>
<accession>P9WJB3</accession>
<accession>I1SB22</accession>
<accession>O07188</accession>
<accession>Q7D6S1</accession>
<proteinExistence type="evidence at protein level"/>